<gene>
    <name evidence="1" type="primary">argR</name>
    <name type="synonym">ahrC</name>
    <name type="ordered locus">OB1875</name>
</gene>
<evidence type="ECO:0000255" key="1">
    <source>
        <dbReference type="HAMAP-Rule" id="MF_00173"/>
    </source>
</evidence>
<name>ARGR_OCEIH</name>
<protein>
    <recommendedName>
        <fullName evidence="1">Arginine repressor</fullName>
    </recommendedName>
</protein>
<feature type="chain" id="PRO_0000205106" description="Arginine repressor">
    <location>
        <begin position="1"/>
        <end position="149"/>
    </location>
</feature>
<dbReference type="EMBL" id="BA000028">
    <property type="protein sequence ID" value="BAC13831.1"/>
    <property type="molecule type" value="Genomic_DNA"/>
</dbReference>
<dbReference type="RefSeq" id="WP_011066272.1">
    <property type="nucleotide sequence ID" value="NC_004193.1"/>
</dbReference>
<dbReference type="SMR" id="Q8CXE2"/>
<dbReference type="STRING" id="221109.gene:10734115"/>
<dbReference type="KEGG" id="oih:OB1875"/>
<dbReference type="eggNOG" id="COG1438">
    <property type="taxonomic scope" value="Bacteria"/>
</dbReference>
<dbReference type="HOGENOM" id="CLU_097103_3_0_9"/>
<dbReference type="OrthoDB" id="9807089at2"/>
<dbReference type="PhylomeDB" id="Q8CXE2"/>
<dbReference type="UniPathway" id="UPA00068"/>
<dbReference type="Proteomes" id="UP000000822">
    <property type="component" value="Chromosome"/>
</dbReference>
<dbReference type="GO" id="GO:0005737">
    <property type="term" value="C:cytoplasm"/>
    <property type="evidence" value="ECO:0007669"/>
    <property type="project" value="UniProtKB-SubCell"/>
</dbReference>
<dbReference type="GO" id="GO:0034618">
    <property type="term" value="F:arginine binding"/>
    <property type="evidence" value="ECO:0007669"/>
    <property type="project" value="InterPro"/>
</dbReference>
<dbReference type="GO" id="GO:0003677">
    <property type="term" value="F:DNA binding"/>
    <property type="evidence" value="ECO:0007669"/>
    <property type="project" value="UniProtKB-KW"/>
</dbReference>
<dbReference type="GO" id="GO:0003700">
    <property type="term" value="F:DNA-binding transcription factor activity"/>
    <property type="evidence" value="ECO:0007669"/>
    <property type="project" value="UniProtKB-UniRule"/>
</dbReference>
<dbReference type="GO" id="GO:0006526">
    <property type="term" value="P:L-arginine biosynthetic process"/>
    <property type="evidence" value="ECO:0007669"/>
    <property type="project" value="UniProtKB-UniPathway"/>
</dbReference>
<dbReference type="GO" id="GO:0051259">
    <property type="term" value="P:protein complex oligomerization"/>
    <property type="evidence" value="ECO:0007669"/>
    <property type="project" value="InterPro"/>
</dbReference>
<dbReference type="GO" id="GO:1900079">
    <property type="term" value="P:regulation of arginine biosynthetic process"/>
    <property type="evidence" value="ECO:0007669"/>
    <property type="project" value="UniProtKB-UniRule"/>
</dbReference>
<dbReference type="FunFam" id="3.30.1360.40:FF:000006">
    <property type="entry name" value="Arginine repressor"/>
    <property type="match status" value="1"/>
</dbReference>
<dbReference type="Gene3D" id="3.30.1360.40">
    <property type="match status" value="1"/>
</dbReference>
<dbReference type="Gene3D" id="1.10.10.10">
    <property type="entry name" value="Winged helix-like DNA-binding domain superfamily/Winged helix DNA-binding domain"/>
    <property type="match status" value="1"/>
</dbReference>
<dbReference type="HAMAP" id="MF_00173">
    <property type="entry name" value="Arg_repressor"/>
    <property type="match status" value="1"/>
</dbReference>
<dbReference type="InterPro" id="IPR001669">
    <property type="entry name" value="Arg_repress"/>
</dbReference>
<dbReference type="InterPro" id="IPR020899">
    <property type="entry name" value="Arg_repress_C"/>
</dbReference>
<dbReference type="InterPro" id="IPR036251">
    <property type="entry name" value="Arg_repress_C_sf"/>
</dbReference>
<dbReference type="InterPro" id="IPR020900">
    <property type="entry name" value="Arg_repress_DNA-bd"/>
</dbReference>
<dbReference type="InterPro" id="IPR036388">
    <property type="entry name" value="WH-like_DNA-bd_sf"/>
</dbReference>
<dbReference type="InterPro" id="IPR036390">
    <property type="entry name" value="WH_DNA-bd_sf"/>
</dbReference>
<dbReference type="NCBIfam" id="TIGR01529">
    <property type="entry name" value="argR_whole"/>
    <property type="match status" value="1"/>
</dbReference>
<dbReference type="NCBIfam" id="NF003281">
    <property type="entry name" value="PRK04280.1"/>
    <property type="match status" value="1"/>
</dbReference>
<dbReference type="PANTHER" id="PTHR34471">
    <property type="entry name" value="ARGININE REPRESSOR"/>
    <property type="match status" value="1"/>
</dbReference>
<dbReference type="PANTHER" id="PTHR34471:SF1">
    <property type="entry name" value="ARGININE REPRESSOR"/>
    <property type="match status" value="1"/>
</dbReference>
<dbReference type="Pfam" id="PF01316">
    <property type="entry name" value="Arg_repressor"/>
    <property type="match status" value="1"/>
</dbReference>
<dbReference type="Pfam" id="PF02863">
    <property type="entry name" value="Arg_repressor_C"/>
    <property type="match status" value="1"/>
</dbReference>
<dbReference type="PRINTS" id="PR01467">
    <property type="entry name" value="ARGREPRESSOR"/>
</dbReference>
<dbReference type="SUPFAM" id="SSF55252">
    <property type="entry name" value="C-terminal domain of arginine repressor"/>
    <property type="match status" value="1"/>
</dbReference>
<dbReference type="SUPFAM" id="SSF46785">
    <property type="entry name" value="Winged helix' DNA-binding domain"/>
    <property type="match status" value="1"/>
</dbReference>
<comment type="function">
    <text evidence="1">Regulates arginine biosynthesis genes.</text>
</comment>
<comment type="pathway">
    <text>Amino-acid biosynthesis; L-arginine biosynthesis [regulation].</text>
</comment>
<comment type="subcellular location">
    <subcellularLocation>
        <location evidence="1">Cytoplasm</location>
    </subcellularLocation>
</comment>
<comment type="similarity">
    <text evidence="1">Belongs to the ArgR family.</text>
</comment>
<sequence>MSKLQRHIKIRELITENIIETQDELVDSLKALDFNVTQATVSRDIKELQLVKVPTTTGQYKYSLPADQRFNPLQKLKRLIVDTFVKIEHASHFIILHTLPGNAHAVGVLIDNLDWEEIMGTICGDDTCLIICRTPEQAEMIKNRFIEML</sequence>
<accession>Q8CXE2</accession>
<organism>
    <name type="scientific">Oceanobacillus iheyensis (strain DSM 14371 / CIP 107618 / JCM 11309 / KCTC 3954 / HTE831)</name>
    <dbReference type="NCBI Taxonomy" id="221109"/>
    <lineage>
        <taxon>Bacteria</taxon>
        <taxon>Bacillati</taxon>
        <taxon>Bacillota</taxon>
        <taxon>Bacilli</taxon>
        <taxon>Bacillales</taxon>
        <taxon>Bacillaceae</taxon>
        <taxon>Oceanobacillus</taxon>
    </lineage>
</organism>
<keyword id="KW-0028">Amino-acid biosynthesis</keyword>
<keyword id="KW-0055">Arginine biosynthesis</keyword>
<keyword id="KW-0963">Cytoplasm</keyword>
<keyword id="KW-0238">DNA-binding</keyword>
<keyword id="KW-1185">Reference proteome</keyword>
<keyword id="KW-0678">Repressor</keyword>
<keyword id="KW-0804">Transcription</keyword>
<keyword id="KW-0805">Transcription regulation</keyword>
<proteinExistence type="inferred from homology"/>
<reference key="1">
    <citation type="journal article" date="2002" name="Nucleic Acids Res.">
        <title>Genome sequence of Oceanobacillus iheyensis isolated from the Iheya Ridge and its unexpected adaptive capabilities to extreme environments.</title>
        <authorList>
            <person name="Takami H."/>
            <person name="Takaki Y."/>
            <person name="Uchiyama I."/>
        </authorList>
    </citation>
    <scope>NUCLEOTIDE SEQUENCE [LARGE SCALE GENOMIC DNA]</scope>
    <source>
        <strain>DSM 14371 / CIP 107618 / JCM 11309 / KCTC 3954 / HTE831</strain>
    </source>
</reference>